<proteinExistence type="inferred from homology"/>
<protein>
    <recommendedName>
        <fullName evidence="1">Glycerol kinase</fullName>
        <ecNumber evidence="1">2.7.1.30</ecNumber>
    </recommendedName>
    <alternativeName>
        <fullName evidence="1">ATP:glycerol 3-phosphotransferase</fullName>
    </alternativeName>
    <alternativeName>
        <fullName evidence="1">Glycerokinase</fullName>
        <shortName evidence="1">GK</shortName>
    </alternativeName>
</protein>
<feature type="chain" id="PRO_1000118555" description="Glycerol kinase">
    <location>
        <begin position="1"/>
        <end position="495"/>
    </location>
</feature>
<feature type="binding site" evidence="1">
    <location>
        <position position="11"/>
    </location>
    <ligand>
        <name>ADP</name>
        <dbReference type="ChEBI" id="CHEBI:456216"/>
    </ligand>
</feature>
<feature type="binding site" evidence="1">
    <location>
        <position position="11"/>
    </location>
    <ligand>
        <name>ATP</name>
        <dbReference type="ChEBI" id="CHEBI:30616"/>
    </ligand>
</feature>
<feature type="binding site" evidence="1">
    <location>
        <position position="11"/>
    </location>
    <ligand>
        <name>sn-glycerol 3-phosphate</name>
        <dbReference type="ChEBI" id="CHEBI:57597"/>
    </ligand>
</feature>
<feature type="binding site" evidence="1">
    <location>
        <position position="12"/>
    </location>
    <ligand>
        <name>ATP</name>
        <dbReference type="ChEBI" id="CHEBI:30616"/>
    </ligand>
</feature>
<feature type="binding site" evidence="1">
    <location>
        <position position="13"/>
    </location>
    <ligand>
        <name>ATP</name>
        <dbReference type="ChEBI" id="CHEBI:30616"/>
    </ligand>
</feature>
<feature type="binding site" evidence="1">
    <location>
        <position position="15"/>
    </location>
    <ligand>
        <name>ADP</name>
        <dbReference type="ChEBI" id="CHEBI:456216"/>
    </ligand>
</feature>
<feature type="binding site" evidence="1">
    <location>
        <position position="81"/>
    </location>
    <ligand>
        <name>glycerol</name>
        <dbReference type="ChEBI" id="CHEBI:17754"/>
    </ligand>
</feature>
<feature type="binding site" evidence="1">
    <location>
        <position position="81"/>
    </location>
    <ligand>
        <name>sn-glycerol 3-phosphate</name>
        <dbReference type="ChEBI" id="CHEBI:57597"/>
    </ligand>
</feature>
<feature type="binding site" evidence="1">
    <location>
        <position position="82"/>
    </location>
    <ligand>
        <name>glycerol</name>
        <dbReference type="ChEBI" id="CHEBI:17754"/>
    </ligand>
</feature>
<feature type="binding site" evidence="1">
    <location>
        <position position="82"/>
    </location>
    <ligand>
        <name>sn-glycerol 3-phosphate</name>
        <dbReference type="ChEBI" id="CHEBI:57597"/>
    </ligand>
</feature>
<feature type="binding site" evidence="1">
    <location>
        <position position="133"/>
    </location>
    <ligand>
        <name>glycerol</name>
        <dbReference type="ChEBI" id="CHEBI:17754"/>
    </ligand>
</feature>
<feature type="binding site" evidence="1">
    <location>
        <position position="133"/>
    </location>
    <ligand>
        <name>sn-glycerol 3-phosphate</name>
        <dbReference type="ChEBI" id="CHEBI:57597"/>
    </ligand>
</feature>
<feature type="binding site" evidence="1">
    <location>
        <position position="242"/>
    </location>
    <ligand>
        <name>glycerol</name>
        <dbReference type="ChEBI" id="CHEBI:17754"/>
    </ligand>
</feature>
<feature type="binding site" evidence="1">
    <location>
        <position position="242"/>
    </location>
    <ligand>
        <name>sn-glycerol 3-phosphate</name>
        <dbReference type="ChEBI" id="CHEBI:57597"/>
    </ligand>
</feature>
<feature type="binding site" evidence="1">
    <location>
        <position position="243"/>
    </location>
    <ligand>
        <name>glycerol</name>
        <dbReference type="ChEBI" id="CHEBI:17754"/>
    </ligand>
</feature>
<feature type="binding site" evidence="1">
    <location>
        <position position="264"/>
    </location>
    <ligand>
        <name>ADP</name>
        <dbReference type="ChEBI" id="CHEBI:456216"/>
    </ligand>
</feature>
<feature type="binding site" evidence="1">
    <location>
        <position position="264"/>
    </location>
    <ligand>
        <name>ATP</name>
        <dbReference type="ChEBI" id="CHEBI:30616"/>
    </ligand>
</feature>
<feature type="binding site" evidence="1">
    <location>
        <position position="307"/>
    </location>
    <ligand>
        <name>ADP</name>
        <dbReference type="ChEBI" id="CHEBI:456216"/>
    </ligand>
</feature>
<feature type="binding site" evidence="1">
    <location>
        <position position="307"/>
    </location>
    <ligand>
        <name>ATP</name>
        <dbReference type="ChEBI" id="CHEBI:30616"/>
    </ligand>
</feature>
<feature type="binding site" evidence="1">
    <location>
        <position position="311"/>
    </location>
    <ligand>
        <name>ATP</name>
        <dbReference type="ChEBI" id="CHEBI:30616"/>
    </ligand>
</feature>
<feature type="binding site" evidence="1">
    <location>
        <position position="408"/>
    </location>
    <ligand>
        <name>ADP</name>
        <dbReference type="ChEBI" id="CHEBI:456216"/>
    </ligand>
</feature>
<feature type="binding site" evidence="1">
    <location>
        <position position="408"/>
    </location>
    <ligand>
        <name>ATP</name>
        <dbReference type="ChEBI" id="CHEBI:30616"/>
    </ligand>
</feature>
<feature type="binding site" evidence="1">
    <location>
        <position position="412"/>
    </location>
    <ligand>
        <name>ADP</name>
        <dbReference type="ChEBI" id="CHEBI:456216"/>
    </ligand>
</feature>
<reference key="1">
    <citation type="journal article" date="2011" name="Stand. Genomic Sci.">
        <title>Complete genome sequence of Rhodospirillum rubrum type strain (S1).</title>
        <authorList>
            <person name="Munk A.C."/>
            <person name="Copeland A."/>
            <person name="Lucas S."/>
            <person name="Lapidus A."/>
            <person name="Del Rio T.G."/>
            <person name="Barry K."/>
            <person name="Detter J.C."/>
            <person name="Hammon N."/>
            <person name="Israni S."/>
            <person name="Pitluck S."/>
            <person name="Brettin T."/>
            <person name="Bruce D."/>
            <person name="Han C."/>
            <person name="Tapia R."/>
            <person name="Gilna P."/>
            <person name="Schmutz J."/>
            <person name="Larimer F."/>
            <person name="Land M."/>
            <person name="Kyrpides N.C."/>
            <person name="Mavromatis K."/>
            <person name="Richardson P."/>
            <person name="Rohde M."/>
            <person name="Goeker M."/>
            <person name="Klenk H.P."/>
            <person name="Zhang Y."/>
            <person name="Roberts G.P."/>
            <person name="Reslewic S."/>
            <person name="Schwartz D.C."/>
        </authorList>
    </citation>
    <scope>NUCLEOTIDE SEQUENCE [LARGE SCALE GENOMIC DNA]</scope>
    <source>
        <strain>ATCC 11170 / ATH 1.1.1 / DSM 467 / LMG 4362 / NCIMB 8255 / S1</strain>
    </source>
</reference>
<keyword id="KW-0067">ATP-binding</keyword>
<keyword id="KW-0319">Glycerol metabolism</keyword>
<keyword id="KW-0418">Kinase</keyword>
<keyword id="KW-0547">Nucleotide-binding</keyword>
<keyword id="KW-1185">Reference proteome</keyword>
<keyword id="KW-0808">Transferase</keyword>
<comment type="function">
    <text evidence="1">Key enzyme in the regulation of glycerol uptake and metabolism. Catalyzes the phosphorylation of glycerol to yield sn-glycerol 3-phosphate.</text>
</comment>
<comment type="catalytic activity">
    <reaction evidence="1">
        <text>glycerol + ATP = sn-glycerol 3-phosphate + ADP + H(+)</text>
        <dbReference type="Rhea" id="RHEA:21644"/>
        <dbReference type="ChEBI" id="CHEBI:15378"/>
        <dbReference type="ChEBI" id="CHEBI:17754"/>
        <dbReference type="ChEBI" id="CHEBI:30616"/>
        <dbReference type="ChEBI" id="CHEBI:57597"/>
        <dbReference type="ChEBI" id="CHEBI:456216"/>
        <dbReference type="EC" id="2.7.1.30"/>
    </reaction>
</comment>
<comment type="activity regulation">
    <text evidence="1">Inhibited by fructose 1,6-bisphosphate (FBP).</text>
</comment>
<comment type="pathway">
    <text evidence="1">Polyol metabolism; glycerol degradation via glycerol kinase pathway; sn-glycerol 3-phosphate from glycerol: step 1/1.</text>
</comment>
<comment type="similarity">
    <text evidence="1">Belongs to the FGGY kinase family.</text>
</comment>
<name>GLPK_RHORT</name>
<evidence type="ECO:0000255" key="1">
    <source>
        <dbReference type="HAMAP-Rule" id="MF_00186"/>
    </source>
</evidence>
<dbReference type="EC" id="2.7.1.30" evidence="1"/>
<dbReference type="EMBL" id="CP000230">
    <property type="protein sequence ID" value="ABC22809.1"/>
    <property type="molecule type" value="Genomic_DNA"/>
</dbReference>
<dbReference type="RefSeq" id="WP_011389762.1">
    <property type="nucleotide sequence ID" value="NC_007643.1"/>
</dbReference>
<dbReference type="RefSeq" id="YP_427096.1">
    <property type="nucleotide sequence ID" value="NC_007643.1"/>
</dbReference>
<dbReference type="SMR" id="Q2RST6"/>
<dbReference type="STRING" id="269796.Rru_A2009"/>
<dbReference type="EnsemblBacteria" id="ABC22809">
    <property type="protein sequence ID" value="ABC22809"/>
    <property type="gene ID" value="Rru_A2009"/>
</dbReference>
<dbReference type="KEGG" id="rru:Rru_A2009"/>
<dbReference type="PATRIC" id="fig|269796.9.peg.2093"/>
<dbReference type="eggNOG" id="COG0554">
    <property type="taxonomic scope" value="Bacteria"/>
</dbReference>
<dbReference type="HOGENOM" id="CLU_009281_2_3_5"/>
<dbReference type="PhylomeDB" id="Q2RST6"/>
<dbReference type="UniPathway" id="UPA00618">
    <property type="reaction ID" value="UER00672"/>
</dbReference>
<dbReference type="Proteomes" id="UP000001929">
    <property type="component" value="Chromosome"/>
</dbReference>
<dbReference type="GO" id="GO:0005829">
    <property type="term" value="C:cytosol"/>
    <property type="evidence" value="ECO:0007669"/>
    <property type="project" value="TreeGrafter"/>
</dbReference>
<dbReference type="GO" id="GO:0005524">
    <property type="term" value="F:ATP binding"/>
    <property type="evidence" value="ECO:0007669"/>
    <property type="project" value="UniProtKB-UniRule"/>
</dbReference>
<dbReference type="GO" id="GO:0004370">
    <property type="term" value="F:glycerol kinase activity"/>
    <property type="evidence" value="ECO:0000250"/>
    <property type="project" value="UniProtKB"/>
</dbReference>
<dbReference type="GO" id="GO:0019563">
    <property type="term" value="P:glycerol catabolic process"/>
    <property type="evidence" value="ECO:0007669"/>
    <property type="project" value="UniProtKB-UniRule"/>
</dbReference>
<dbReference type="GO" id="GO:0006071">
    <property type="term" value="P:glycerol metabolic process"/>
    <property type="evidence" value="ECO:0000250"/>
    <property type="project" value="UniProtKB"/>
</dbReference>
<dbReference type="GO" id="GO:0006072">
    <property type="term" value="P:glycerol-3-phosphate metabolic process"/>
    <property type="evidence" value="ECO:0007669"/>
    <property type="project" value="InterPro"/>
</dbReference>
<dbReference type="CDD" id="cd07786">
    <property type="entry name" value="FGGY_EcGK_like"/>
    <property type="match status" value="1"/>
</dbReference>
<dbReference type="FunFam" id="3.30.420.40:FF:000007">
    <property type="entry name" value="Glycerol kinase"/>
    <property type="match status" value="1"/>
</dbReference>
<dbReference type="FunFam" id="3.30.420.40:FF:000008">
    <property type="entry name" value="Glycerol kinase"/>
    <property type="match status" value="1"/>
</dbReference>
<dbReference type="Gene3D" id="3.30.420.40">
    <property type="match status" value="2"/>
</dbReference>
<dbReference type="HAMAP" id="MF_00186">
    <property type="entry name" value="Glycerol_kin"/>
    <property type="match status" value="1"/>
</dbReference>
<dbReference type="InterPro" id="IPR043129">
    <property type="entry name" value="ATPase_NBD"/>
</dbReference>
<dbReference type="InterPro" id="IPR000577">
    <property type="entry name" value="Carb_kinase_FGGY"/>
</dbReference>
<dbReference type="InterPro" id="IPR018483">
    <property type="entry name" value="Carb_kinase_FGGY_CS"/>
</dbReference>
<dbReference type="InterPro" id="IPR018485">
    <property type="entry name" value="FGGY_C"/>
</dbReference>
<dbReference type="InterPro" id="IPR018484">
    <property type="entry name" value="FGGY_N"/>
</dbReference>
<dbReference type="InterPro" id="IPR005999">
    <property type="entry name" value="Glycerol_kin"/>
</dbReference>
<dbReference type="NCBIfam" id="TIGR01311">
    <property type="entry name" value="glycerol_kin"/>
    <property type="match status" value="1"/>
</dbReference>
<dbReference type="NCBIfam" id="NF000756">
    <property type="entry name" value="PRK00047.1"/>
    <property type="match status" value="1"/>
</dbReference>
<dbReference type="PANTHER" id="PTHR10196:SF78">
    <property type="entry name" value="GLYCEROL KINASE"/>
    <property type="match status" value="1"/>
</dbReference>
<dbReference type="PANTHER" id="PTHR10196">
    <property type="entry name" value="SUGAR KINASE"/>
    <property type="match status" value="1"/>
</dbReference>
<dbReference type="Pfam" id="PF02782">
    <property type="entry name" value="FGGY_C"/>
    <property type="match status" value="1"/>
</dbReference>
<dbReference type="Pfam" id="PF00370">
    <property type="entry name" value="FGGY_N"/>
    <property type="match status" value="1"/>
</dbReference>
<dbReference type="PIRSF" id="PIRSF000538">
    <property type="entry name" value="GlpK"/>
    <property type="match status" value="1"/>
</dbReference>
<dbReference type="SUPFAM" id="SSF53067">
    <property type="entry name" value="Actin-like ATPase domain"/>
    <property type="match status" value="2"/>
</dbReference>
<dbReference type="PROSITE" id="PS00445">
    <property type="entry name" value="FGGY_KINASES_2"/>
    <property type="match status" value="1"/>
</dbReference>
<gene>
    <name evidence="1" type="primary">glpK</name>
    <name type="ordered locus">Rru_A2009</name>
</gene>
<sequence>MPFLLAIDQGTTSSRAIVFDHEGQPIARAQKDLVQYFPGDGWVEHDATAIWEDSLAVAREALDRADVAAHAISAIGLTNQRETAVLWERASGQPVHNAIVWQDRRTAALCRELKAQGHEALVRRKTGLLIDPYFSATKIGWMLDHDPVLRRRAEAGELAFGTVESWLLYKLTGGAVHASDATNAARTLLFDIRANRWDEDLLALFRIPAALLPRVVDNAGRFGETLPGLFGAPIPITGMAGDQHAAMVGQGCFTRGMIKSTYGTGAFALLNIGQTFVESRNQLLTTLAYRLNGQSTYALEGSIFVAGAAVQWLRDGLRAISSAAETQVLAEAVADTGGCYMVPAFTGLGAPYWDPEARGAILGLTRDTSLEQVARAALEAQGYQTRDLLDAMAADSGTKPLALRVDGGMVANDWVCQFLADITGIAVERPRVIETTALGAAALAGLGAGVFASPADLGGQWHRDRLFTPHMPASRRESLYAGWVQAVRRVASDLR</sequence>
<organism>
    <name type="scientific">Rhodospirillum rubrum (strain ATCC 11170 / ATH 1.1.1 / DSM 467 / LMG 4362 / NCIMB 8255 / S1)</name>
    <dbReference type="NCBI Taxonomy" id="269796"/>
    <lineage>
        <taxon>Bacteria</taxon>
        <taxon>Pseudomonadati</taxon>
        <taxon>Pseudomonadota</taxon>
        <taxon>Alphaproteobacteria</taxon>
        <taxon>Rhodospirillales</taxon>
        <taxon>Rhodospirillaceae</taxon>
        <taxon>Rhodospirillum</taxon>
    </lineage>
</organism>
<accession>Q2RST6</accession>